<protein>
    <recommendedName>
        <fullName>Sodium/hydrogen exchanger 3</fullName>
    </recommendedName>
    <alternativeName>
        <fullName>Na(+)/H(+) exchanger 3</fullName>
        <shortName>NHE-3</shortName>
    </alternativeName>
    <alternativeName>
        <fullName>Solute carrier family 9 member 3</fullName>
    </alternativeName>
</protein>
<organism>
    <name type="scientific">Oryctolagus cuniculus</name>
    <name type="common">Rabbit</name>
    <dbReference type="NCBI Taxonomy" id="9986"/>
    <lineage>
        <taxon>Eukaryota</taxon>
        <taxon>Metazoa</taxon>
        <taxon>Chordata</taxon>
        <taxon>Craniata</taxon>
        <taxon>Vertebrata</taxon>
        <taxon>Euteleostomi</taxon>
        <taxon>Mammalia</taxon>
        <taxon>Eutheria</taxon>
        <taxon>Euarchontoglires</taxon>
        <taxon>Glires</taxon>
        <taxon>Lagomorpha</taxon>
        <taxon>Leporidae</taxon>
        <taxon>Oryctolagus</taxon>
    </lineage>
</organism>
<proteinExistence type="evidence at protein level"/>
<comment type="function">
    <text evidence="3 10 11 13 14 17">Plasma membrane Na(+)/H(+) antiporter. Exchanges intracellular H(+) ions for extracellular Na(+) in 1:1 stoichiometry, playing a key role in salt and fluid absorption and pH homeostasis (PubMed:16540524, PubMed:18614797, PubMed:19088451, PubMed:20736165, PubMed:8244988). Major apical Na(+)/H(+) exchanger in kidney and intestine playing an important role in renal and intestine Na(+) absorption and blood pressure regulation (By similarity).</text>
</comment>
<comment type="catalytic activity">
    <reaction evidence="10 11 13 14 17">
        <text>Na(+)(in) + H(+)(out) = Na(+)(out) + H(+)(in)</text>
        <dbReference type="Rhea" id="RHEA:29419"/>
        <dbReference type="ChEBI" id="CHEBI:15378"/>
        <dbReference type="ChEBI" id="CHEBI:29101"/>
    </reaction>
</comment>
<comment type="activity regulation">
    <text evidence="3 14">Seems to switch between active and inactive modes in response to various stimuli (By similarity). Activated directly or indirectly by membrane phosphatidylinositol (PIs) (PubMed:20736165). Regulated by a variety of auxiliary proteins, which facilitate the maturation, cell surface expression and function of the transporter. Inhibited specifically by the drug tenapanor (By similarity).</text>
</comment>
<comment type="biophysicochemical properties">
    <kinetics>
        <KM evidence="17">0.12 uM for H(+)</KM>
        <KM evidence="17">17 mM for Na(+)</KM>
    </kinetics>
</comment>
<comment type="subunit">
    <text evidence="2 3 4 9 10 12 13 16 18">Homodimer (By similarity). Found in the forms of complex and dynamic macromolecular complexes (PubMed:28495796). Interacts with CHP1; this interaction increases trafficking and activity at the plasma membrane of SLC9A3 (By similarity). Interacts with CHP2 and SHANK2 (By similarity). Interacts with NHERF4 and interaction decreases in response to elevated calcium ion levels (PubMed:19088451). Binds NHERF1 and NHERF2 (PubMed:28495796, PubMed:9096337). Interacts with PDZK1 (via C-terminal PDZ domain). Interacts with AHCYL1; interaction is required for SLC9A3 activity (PubMed:18829453). Interacts with EZR; interaction targets SLC9A3 to the apical membrane (PubMed:16540524). Interacts with SNX27 (via PDZ domains); directs SLC9A3 membrane insertion from early endosomes to the plasma membrane (PubMed:28495796).</text>
</comment>
<comment type="subcellular location">
    <subcellularLocation>
        <location evidence="8">Apical cell membrane</location>
        <topology evidence="3">Multi-pass membrane protein</topology>
    </subcellularLocation>
    <subcellularLocation>
        <location evidence="10">Cell membrane</location>
        <topology evidence="3">Multi-pass membrane protein</topology>
    </subcellularLocation>
    <subcellularLocation>
        <location evidence="3">Recycling endosome membrane</location>
        <topology evidence="3">Multi-pass membrane protein</topology>
    </subcellularLocation>
    <subcellularLocation>
        <location evidence="3">Early endosome membrane</location>
        <topology evidence="3">Multi-pass membrane protein</topology>
    </subcellularLocation>
    <text evidence="4 16">In intestinal epithelial cells, localizes to the ileal brush border (PubMed:28495796). Phosphorylation at Ser-663 by SGK1 is associated with increased abundance at the cell membrane. Angiotensin-2 enhances apical expression (By similarity).</text>
</comment>
<comment type="tissue specificity">
    <text evidence="7">Intestinal and kidney specific. Most abundant in kidney cortex, followed equally by ileum and ascending colon, then kidney medulla and jejunum. Is absent from duodenum and descending colon.</text>
</comment>
<comment type="domain">
    <text evidence="8 11 12 14 15 16 18">The C-terminal intracellular domain is subject to extensive post-translational modifications and binding partner interactions which regulate transporter activity, scaffolding functions, downstream events and localization.</text>
</comment>
<comment type="PTM">
    <text evidence="2 8 11 16">Phosphorylated by PKA, which inhibits activity (By similarity). Phosphorylation at Ser-663 by SGK1 is associated with increased abundance at the cell membrane and activity (PubMed:15888551). Phosphorylation at Ser-719 by CSNK2A1 regulates SLC9A3 activity through the formation of multiple signaling complexes (PubMed:18614797, PubMed:28495796).</text>
</comment>
<comment type="similarity">
    <text evidence="19">Belongs to the monovalent cation:proton antiporter 1 (CPA1) transporter (TC 2.A.36) family.</text>
</comment>
<dbReference type="EMBL" id="M87007">
    <property type="protein sequence ID" value="AAA31420.1"/>
    <property type="molecule type" value="mRNA"/>
</dbReference>
<dbReference type="PIR" id="A40205">
    <property type="entry name" value="A40205"/>
</dbReference>
<dbReference type="RefSeq" id="NP_001076166.1">
    <property type="nucleotide sequence ID" value="NM_001082697.1"/>
</dbReference>
<dbReference type="SMR" id="P26432"/>
<dbReference type="FunCoup" id="P26432">
    <property type="interactions" value="10"/>
</dbReference>
<dbReference type="STRING" id="9986.ENSOCUP00000046707"/>
<dbReference type="BindingDB" id="P26432"/>
<dbReference type="ChEMBL" id="CHEMBL2096985"/>
<dbReference type="GlyCosmos" id="P26432">
    <property type="glycosylation" value="1 site, No reported glycans"/>
</dbReference>
<dbReference type="iPTMnet" id="P26432"/>
<dbReference type="PaxDb" id="9986-ENSOCUP00000024686"/>
<dbReference type="GeneID" id="100009430"/>
<dbReference type="KEGG" id="ocu:100009430"/>
<dbReference type="CTD" id="6550"/>
<dbReference type="eggNOG" id="KOG1966">
    <property type="taxonomic scope" value="Eukaryota"/>
</dbReference>
<dbReference type="InParanoid" id="P26432"/>
<dbReference type="OrthoDB" id="196264at2759"/>
<dbReference type="PRO" id="PR:P26432"/>
<dbReference type="Proteomes" id="UP000001811">
    <property type="component" value="Unplaced"/>
</dbReference>
<dbReference type="GO" id="GO:0016324">
    <property type="term" value="C:apical plasma membrane"/>
    <property type="evidence" value="ECO:0000250"/>
    <property type="project" value="UniProtKB"/>
</dbReference>
<dbReference type="GO" id="GO:0005903">
    <property type="term" value="C:brush border"/>
    <property type="evidence" value="ECO:0000314"/>
    <property type="project" value="UniProtKB"/>
</dbReference>
<dbReference type="GO" id="GO:0031526">
    <property type="term" value="C:brush border membrane"/>
    <property type="evidence" value="ECO:0000314"/>
    <property type="project" value="UniProtKB"/>
</dbReference>
<dbReference type="GO" id="GO:0009986">
    <property type="term" value="C:cell surface"/>
    <property type="evidence" value="ECO:0000314"/>
    <property type="project" value="UniProtKB"/>
</dbReference>
<dbReference type="GO" id="GO:0031901">
    <property type="term" value="C:early endosome membrane"/>
    <property type="evidence" value="ECO:0007669"/>
    <property type="project" value="UniProtKB-SubCell"/>
</dbReference>
<dbReference type="GO" id="GO:0005886">
    <property type="term" value="C:plasma membrane"/>
    <property type="evidence" value="ECO:0000250"/>
    <property type="project" value="UniProtKB"/>
</dbReference>
<dbReference type="GO" id="GO:0055038">
    <property type="term" value="C:recycling endosome membrane"/>
    <property type="evidence" value="ECO:0007669"/>
    <property type="project" value="UniProtKB-SubCell"/>
</dbReference>
<dbReference type="GO" id="GO:0042802">
    <property type="term" value="F:identical protein binding"/>
    <property type="evidence" value="ECO:0000250"/>
    <property type="project" value="UniProtKB"/>
</dbReference>
<dbReference type="GO" id="GO:0030165">
    <property type="term" value="F:PDZ domain binding"/>
    <property type="evidence" value="ECO:0000250"/>
    <property type="project" value="UniProtKB"/>
</dbReference>
<dbReference type="GO" id="GO:0035091">
    <property type="term" value="F:phosphatidylinositol binding"/>
    <property type="evidence" value="ECO:0000314"/>
    <property type="project" value="UniProtKB"/>
</dbReference>
<dbReference type="GO" id="GO:0015386">
    <property type="term" value="F:potassium:proton antiporter activity"/>
    <property type="evidence" value="ECO:0007669"/>
    <property type="project" value="TreeGrafter"/>
</dbReference>
<dbReference type="GO" id="GO:0015385">
    <property type="term" value="F:sodium:proton antiporter activity"/>
    <property type="evidence" value="ECO:0000314"/>
    <property type="project" value="UniProtKB"/>
</dbReference>
<dbReference type="GO" id="GO:0051453">
    <property type="term" value="P:regulation of intracellular pH"/>
    <property type="evidence" value="ECO:0007669"/>
    <property type="project" value="TreeGrafter"/>
</dbReference>
<dbReference type="GO" id="GO:0098719">
    <property type="term" value="P:sodium ion import across plasma membrane"/>
    <property type="evidence" value="ECO:0000250"/>
    <property type="project" value="UniProtKB"/>
</dbReference>
<dbReference type="Gene3D" id="6.10.140.1330">
    <property type="match status" value="1"/>
</dbReference>
<dbReference type="InterPro" id="IPR018422">
    <property type="entry name" value="Cation/H_exchanger_CPA1"/>
</dbReference>
<dbReference type="InterPro" id="IPR006153">
    <property type="entry name" value="Cation/H_exchanger_TM"/>
</dbReference>
<dbReference type="InterPro" id="IPR018410">
    <property type="entry name" value="Na/H_exchanger_3/5"/>
</dbReference>
<dbReference type="InterPro" id="IPR004709">
    <property type="entry name" value="NaH_exchanger"/>
</dbReference>
<dbReference type="NCBIfam" id="TIGR00840">
    <property type="entry name" value="b_cpa1"/>
    <property type="match status" value="1"/>
</dbReference>
<dbReference type="PANTHER" id="PTHR10110">
    <property type="entry name" value="SODIUM/HYDROGEN EXCHANGER"/>
    <property type="match status" value="1"/>
</dbReference>
<dbReference type="PANTHER" id="PTHR10110:SF90">
    <property type="entry name" value="SODIUM_HYDROGEN EXCHANGER 3"/>
    <property type="match status" value="1"/>
</dbReference>
<dbReference type="Pfam" id="PF00999">
    <property type="entry name" value="Na_H_Exchanger"/>
    <property type="match status" value="1"/>
</dbReference>
<dbReference type="PRINTS" id="PR01084">
    <property type="entry name" value="NAHEXCHNGR"/>
</dbReference>
<dbReference type="PRINTS" id="PR01087">
    <property type="entry name" value="NAHEXCHNGR3"/>
</dbReference>
<sequence>MSGRGGCGPCWGLLLALVLALGALPWTQGAEQEHHDEIQGFQIVTFKWHHVQDPYIIALWVLVASLAKIVFHLSHKVTSVVPESALLIVLGLVLGGIVLAADHIASFTLTPTVFFFYLLPPIVLDAGYFMPNRLFFSNLGSILLYAVVGTVWNAATTGLSLYGVFLSGIMGELKIGLLDFLLFGSLIAAVDPVAVLAVFEEVHVNEVLFIIVFGESLLNDAVTVVLYNVFQSFVTLGGDKVTGVDCVKGIVSFFVVSLGGTLVGVVFAFLLSLVTRFTKHVRVIEPGFVFIISYLSYLTSEMLSLSSILAITFCGICCQKYVKANISEQSATTVRYTMKMLASGAETIIFMFLGISAVDPLIWTWNTAFVLLTLLFVSVFRAIGVVLQTWLLNRYRMVQLELIDQVVMSYGGLRGAVAFALVALLDGNKVKEKNLFVSTTIIVVFFTVIFQGLTIKPLVQWLKVKRSEHREPKLNEKLHGRAFDHILSAIEDISGQIGHNYLRDKWANFDRRFLSKLLMRQSAQKSRDRILNVFHELNLKDAISYVTEGERRGSLAFIRSPSTDNMVNVDFSTPRPSTVEASVSYLLRESASAVCLDMQSLEQRRRSVRDAEDVITHHTLQQYLYKPRQEYKHLYSRHVLSPSEDEKQDKEIFHRTMRKRLESFKSAKLGLGQSKKATKHKRERERAQKRRNSSVPNGKLPLDSPAYGLTLKERELELSDPEEAPDYYEAEKMSGGIEFLASVTKDTTSDSPAGIDNPVFSPDEDLAPSLLARVPPWLSPGEAVVPSQRARVQIPYSPGNFRRLAPFRLSNKSVDSFLLAEDGAEHPESTHM</sequence>
<evidence type="ECO:0000250" key="1">
    <source>
        <dbReference type="UniProtKB" id="G3X939"/>
    </source>
</evidence>
<evidence type="ECO:0000250" key="2">
    <source>
        <dbReference type="UniProtKB" id="P26433"/>
    </source>
</evidence>
<evidence type="ECO:0000250" key="3">
    <source>
        <dbReference type="UniProtKB" id="P48764"/>
    </source>
</evidence>
<evidence type="ECO:0000250" key="4">
    <source>
        <dbReference type="UniProtKB" id="Q28362"/>
    </source>
</evidence>
<evidence type="ECO:0000255" key="5"/>
<evidence type="ECO:0000256" key="6">
    <source>
        <dbReference type="SAM" id="MobiDB-lite"/>
    </source>
</evidence>
<evidence type="ECO:0000269" key="7">
    <source>
    </source>
</evidence>
<evidence type="ECO:0000269" key="8">
    <source>
    </source>
</evidence>
<evidence type="ECO:0000269" key="9">
    <source>
    </source>
</evidence>
<evidence type="ECO:0000269" key="10">
    <source>
    </source>
</evidence>
<evidence type="ECO:0000269" key="11">
    <source>
    </source>
</evidence>
<evidence type="ECO:0000269" key="12">
    <source>
    </source>
</evidence>
<evidence type="ECO:0000269" key="13">
    <source>
    </source>
</evidence>
<evidence type="ECO:0000269" key="14">
    <source>
    </source>
</evidence>
<evidence type="ECO:0000269" key="15">
    <source>
    </source>
</evidence>
<evidence type="ECO:0000269" key="16">
    <source>
    </source>
</evidence>
<evidence type="ECO:0000269" key="17">
    <source>
    </source>
</evidence>
<evidence type="ECO:0000269" key="18">
    <source>
    </source>
</evidence>
<evidence type="ECO:0000305" key="19"/>
<name>SL9A3_RABIT</name>
<keyword id="KW-0050">Antiport</keyword>
<keyword id="KW-1003">Cell membrane</keyword>
<keyword id="KW-0967">Endosome</keyword>
<keyword id="KW-0406">Ion transport</keyword>
<keyword id="KW-0472">Membrane</keyword>
<keyword id="KW-0597">Phosphoprotein</keyword>
<keyword id="KW-1185">Reference proteome</keyword>
<keyword id="KW-0732">Signal</keyword>
<keyword id="KW-0915">Sodium</keyword>
<keyword id="KW-0739">Sodium transport</keyword>
<keyword id="KW-0812">Transmembrane</keyword>
<keyword id="KW-1133">Transmembrane helix</keyword>
<keyword id="KW-0813">Transport</keyword>
<accession>P26432</accession>
<gene>
    <name type="primary">SLC9A3</name>
    <name type="synonym">NHE3</name>
</gene>
<reference key="1">
    <citation type="journal article" date="1992" name="J. Biol. Chem.">
        <title>Cloning and sequencing of a rabbit cDNA encoding an intestinal and kidney-specific Na+/H+ exchanger isoform (NHE-3).</title>
        <authorList>
            <person name="Tse C.-M."/>
            <person name="Brant S.R."/>
            <person name="Walker S.S."/>
            <person name="Pouyssegur J."/>
            <person name="Donowitz M."/>
        </authorList>
    </citation>
    <scope>NUCLEOTIDE SEQUENCE [MRNA]</scope>
    <scope>TISSUE SPECIFICITY</scope>
    <source>
        <strain>New Zealand white</strain>
        <tissue>Ileal villus</tissue>
        <tissue>Kidney cortex</tissue>
    </source>
</reference>
<reference key="2">
    <citation type="journal article" date="1993" name="J. Biol. Chem.">
        <title>Kinetics and regulation of three cloned mammalian Na+/H+ exchangers stably expressed in a fibroblast cell line.</title>
        <authorList>
            <person name="Levine S.A."/>
            <person name="Montrose M.H."/>
            <person name="Tse C.M."/>
            <person name="Donowitz M."/>
        </authorList>
    </citation>
    <scope>FUNCTION</scope>
    <scope>TRANSPORTER ACTIVITY</scope>
    <scope>BIOPHYSICOCHEMICAL PROPERTIES</scope>
</reference>
<reference key="3">
    <citation type="journal article" date="1997" name="Proc. Natl. Acad. Sci. U.S.A.">
        <title>cAMP-mediated inhibition of the epithelial brush border Na+/H+ exchanger, NHE3, requires an associated regulatory protein.</title>
        <authorList>
            <person name="Yun C.H.C."/>
            <person name="Oh S."/>
            <person name="Zizak M."/>
            <person name="Steplock D."/>
            <person name="Tsao S."/>
            <person name="Tse C.-M."/>
            <person name="Weinman E.J."/>
            <person name="Donowitz M."/>
        </authorList>
    </citation>
    <scope>INTERACTION WITH NHERF1 AND NHERF2</scope>
</reference>
<reference key="4">
    <citation type="journal article" date="2005" name="Am. J. Physiol.">
        <title>Activation of NHE3 by dexamethasone requires phosphorylation of NHE3 at Ser663 by SGK1.</title>
        <authorList>
            <person name="Wang D."/>
            <person name="Sun H."/>
            <person name="Lang F."/>
            <person name="Yun C.C."/>
        </authorList>
    </citation>
    <scope>PHOSPHORYLATION AT SER-663 BY SGK1</scope>
    <scope>SUBCELLULAR LOCATION</scope>
</reference>
<reference key="5">
    <citation type="journal article" date="2005" name="Proc. Natl. Acad. Sci. U.S.A.">
        <title>Role of PDZK1 in membrane expression of renal brush border ion exchangers.</title>
        <authorList>
            <person name="Thomson R.B."/>
            <person name="Wang T."/>
            <person name="Thomson B.R."/>
            <person name="Tarrats L."/>
            <person name="Girardi A."/>
            <person name="Mentone S."/>
            <person name="Soleimani M."/>
            <person name="Kocher O."/>
            <person name="Aronson P.S."/>
        </authorList>
    </citation>
    <scope>INTERACTION WITH PDZK1</scope>
</reference>
<reference key="6">
    <citation type="journal article" date="2006" name="Mol. Biol. Cell">
        <title>The NHE3 juxtamembrane cytoplasmic domain directly binds ezrin: dual role in NHE3 trafficking and mobility in the brush border.</title>
        <authorList>
            <person name="Cha B."/>
            <person name="Tse M."/>
            <person name="Yun C."/>
            <person name="Kovbasnjuk O."/>
            <person name="Mohan S."/>
            <person name="Hubbard A."/>
            <person name="Arpin M."/>
            <person name="Donowitz M."/>
        </authorList>
    </citation>
    <scope>FUNCTION</scope>
    <scope>SUBCELLULAR LOCATION</scope>
    <scope>INTERACTION WITH EZR</scope>
    <scope>MUTAGENESIS OF LYS-516; ARG-520 AND ARG-527</scope>
</reference>
<reference key="7">
    <citation type="journal article" date="2008" name="Cell. Physiol. Biochem.">
        <title>Elevated intracellular calcium stimulates NHE3 activity by an IKEPP (NHERF4) dependent mechanism.</title>
        <authorList>
            <person name="Zachos N.C."/>
            <person name="Hodson C."/>
            <person name="Kovbasnjuk O."/>
            <person name="Li X."/>
            <person name="Thelin W.R."/>
            <person name="Cha B."/>
            <person name="Milgram S."/>
            <person name="Donowitz M."/>
        </authorList>
    </citation>
    <scope>INTERACTION WITH NHERF4</scope>
    <scope>FUNCTION</scope>
    <scope>CATALYTIC ACTIVITY</scope>
</reference>
<reference key="8">
    <citation type="journal article" date="2008" name="J. Biol. Chem.">
        <title>IRBIT, inositol 1,4,5-triphosphate (IP3) receptor-binding protein released with IP3, binds Na+/H+ exchanger NHE3 and activates NHE3 activity in response to calcium.</title>
        <authorList>
            <person name="He P."/>
            <person name="Zhang H."/>
            <person name="Yun C.C."/>
        </authorList>
    </citation>
    <scope>INTERACTION WITH AHCYL1</scope>
</reference>
<reference key="9">
    <citation type="journal article" date="2008" name="Mol. Biol. Cell">
        <title>Casein kinase 2 binds to the C terminus of Na+/H+ exchanger 3 (NHE3) and stimulates NHE3 basal activity by phosphorylating a separate site in NHE3.</title>
        <authorList>
            <person name="Sarker R."/>
            <person name="Groenborg M."/>
            <person name="Cha B."/>
            <person name="Mohan S."/>
            <person name="Chen Y."/>
            <person name="Pandey A."/>
            <person name="Litchfield D."/>
            <person name="Donowitz M."/>
            <person name="Li X."/>
        </authorList>
    </citation>
    <scope>PHOSPHORYLATION AT SER-719</scope>
    <scope>MUTAGENESIS OF SER-719</scope>
    <scope>FUNCTION</scope>
    <scope>TRANSPORTER ACTIVITY</scope>
</reference>
<reference key="10">
    <citation type="journal article" date="2010" name="J. Biol. Chem.">
        <title>NHE3 activity is dependent on direct phosphoinositide binding at the N terminus of its intracellular cytosolic region.</title>
        <authorList>
            <person name="Mohan S."/>
            <person name="Tse C.M."/>
            <person name="Gabelli S.B."/>
            <person name="Sarker R."/>
            <person name="Cha B."/>
            <person name="Fahie K."/>
            <person name="Nadella M."/>
            <person name="Zachos N.C."/>
            <person name="Tu-Sekine B."/>
            <person name="Raben D."/>
            <person name="Amzel L.M."/>
            <person name="Donowitz M."/>
        </authorList>
    </citation>
    <scope>FUNCTION</scope>
    <scope>CATALYTIC ACTIVITY</scope>
    <scope>ACTIVITY REGULATION</scope>
    <scope>PHOSPHOLIPID-BINDING</scope>
</reference>
<reference key="11">
    <citation type="journal article" date="2015" name="J. Biol. Chem.">
        <title>Cyclic GMP kinase II (cGKII) inhibits NHE3 by altering its trafficking and phosphorylating NHE3 at three required sites: identification of a multifunctional phosphorylation site.</title>
        <authorList>
            <person name="Chen T."/>
            <person name="Kocinsky H.S."/>
            <person name="Cha B."/>
            <person name="Murtazina R."/>
            <person name="Yang J."/>
            <person name="Tse C.M."/>
            <person name="Singh V."/>
            <person name="Cole R."/>
            <person name="Aronson P.S."/>
            <person name="de Jonge H."/>
            <person name="Sarker R."/>
            <person name="Donowitz M."/>
        </authorList>
    </citation>
    <scope>PHOSPHORYLATION AT SER-554; SER-607 AND SER-663</scope>
</reference>
<reference key="12">
    <citation type="journal article" date="2017" name="Mol. Biol. Cell">
        <title>Phosphorylation of NHE3-S719 regulates NHE3 activity through the formation of multiple signaling complexes.</title>
        <authorList>
            <person name="Sarker R."/>
            <person name="Cha B."/>
            <person name="Kovbasnjuk O."/>
            <person name="Cole R."/>
            <person name="Gabelli S."/>
            <person name="Tse C.M."/>
            <person name="Donowitz M."/>
        </authorList>
    </citation>
    <scope>MUTAGENESIS OF SER-719</scope>
    <scope>INTERACTION WITH NHERF2</scope>
    <scope>INTERACTION WITH SNX27</scope>
    <scope>SUBCELLULAR LOCATION</scope>
</reference>
<feature type="signal peptide" evidence="5">
    <location>
        <begin position="1"/>
        <end position="29"/>
    </location>
</feature>
<feature type="chain" id="PRO_0000052357" description="Sodium/hydrogen exchanger 3">
    <location>
        <begin position="30"/>
        <end position="832"/>
    </location>
</feature>
<feature type="topological domain" description="Extracellular" evidence="19">
    <location>
        <begin position="30"/>
        <end position="50"/>
    </location>
</feature>
<feature type="transmembrane region" description="Helical; Name=1" evidence="3">
    <location>
        <begin position="51"/>
        <end position="73"/>
    </location>
</feature>
<feature type="topological domain" description="Cytoplasmic" evidence="19">
    <location>
        <begin position="74"/>
        <end position="81"/>
    </location>
</feature>
<feature type="transmembrane region" description="Helical; Name=2" evidence="3">
    <location>
        <begin position="82"/>
        <end position="101"/>
    </location>
</feature>
<feature type="topological domain" description="Extracellular" evidence="19">
    <location>
        <begin position="102"/>
        <end position="110"/>
    </location>
</feature>
<feature type="transmembrane region" description="Helical; Name=3" evidence="3">
    <location>
        <begin position="111"/>
        <end position="128"/>
    </location>
</feature>
<feature type="topological domain" description="Cytoplasmic" evidence="19">
    <location>
        <begin position="129"/>
        <end position="131"/>
    </location>
</feature>
<feature type="transmembrane region" description="Helical; Name=4" evidence="3">
    <location>
        <begin position="132"/>
        <end position="167"/>
    </location>
</feature>
<feature type="topological domain" description="Extracellular" evidence="19">
    <location>
        <begin position="168"/>
        <end position="180"/>
    </location>
</feature>
<feature type="transmembrane region" description="Helical; Name=5" evidence="3">
    <location>
        <begin position="181"/>
        <end position="202"/>
    </location>
</feature>
<feature type="topological domain" description="Cytoplasmic" evidence="19">
    <location>
        <begin position="203"/>
        <end position="204"/>
    </location>
</feature>
<feature type="transmembrane region" description="Helical; Name=6" evidence="3">
    <location>
        <begin position="205"/>
        <end position="236"/>
    </location>
</feature>
<feature type="topological domain" description="Extracellular" evidence="19">
    <location>
        <begin position="237"/>
        <end position="243"/>
    </location>
</feature>
<feature type="transmembrane region" description="Helical; Name=7" evidence="3">
    <location>
        <begin position="244"/>
        <end position="278"/>
    </location>
</feature>
<feature type="topological domain" description="Cytoplasmic" evidence="19">
    <location>
        <begin position="279"/>
        <end position="280"/>
    </location>
</feature>
<feature type="transmembrane region" description="Helical; Name=8" evidence="3">
    <location>
        <begin position="281"/>
        <end position="303"/>
    </location>
</feature>
<feature type="topological domain" description="Extracellular" evidence="19">
    <location>
        <begin position="304"/>
        <end position="305"/>
    </location>
</feature>
<feature type="transmembrane region" description="Helical; Name=9" evidence="3">
    <location>
        <begin position="306"/>
        <end position="322"/>
    </location>
</feature>
<feature type="topological domain" description="Cytoplasmic" evidence="19">
    <location>
        <begin position="323"/>
        <end position="329"/>
    </location>
</feature>
<feature type="transmembrane region" description="Helical; Name=10" evidence="3">
    <location>
        <begin position="330"/>
        <end position="358"/>
    </location>
</feature>
<feature type="topological domain" description="Extracellular" evidence="19">
    <location>
        <begin position="359"/>
        <end position="366"/>
    </location>
</feature>
<feature type="transmembrane region" description="Helical; Name=11" evidence="3">
    <location>
        <begin position="367"/>
        <end position="388"/>
    </location>
</feature>
<feature type="topological domain" description="Cytoplasmic" evidence="19">
    <location>
        <begin position="389"/>
        <end position="401"/>
    </location>
</feature>
<feature type="transmembrane region" description="Helical; Name=12" evidence="3">
    <location>
        <begin position="402"/>
        <end position="425"/>
    </location>
</feature>
<feature type="topological domain" description="Extracellular" evidence="19">
    <location>
        <begin position="426"/>
        <end position="432"/>
    </location>
</feature>
<feature type="transmembrane region" description="Helical; Name=13" evidence="3">
    <location>
        <begin position="433"/>
        <end position="466"/>
    </location>
</feature>
<feature type="topological domain" description="Cytoplasmic" evidence="19">
    <location>
        <begin position="467"/>
        <end position="832"/>
    </location>
</feature>
<feature type="region of interest" description="Interaction with EZR" evidence="10">
    <location>
        <begin position="575"/>
        <end position="589"/>
    </location>
</feature>
<feature type="region of interest" description="Interaction with NHERF4" evidence="13">
    <location>
        <begin position="590"/>
        <end position="667"/>
    </location>
</feature>
<feature type="region of interest" description="Interaction with AHCYL1" evidence="12">
    <location>
        <begin position="591"/>
        <end position="696"/>
    </location>
</feature>
<feature type="region of interest" description="Disordered" evidence="6">
    <location>
        <begin position="664"/>
        <end position="706"/>
    </location>
</feature>
<feature type="compositionally biased region" description="Basic residues" evidence="6">
    <location>
        <begin position="676"/>
        <end position="692"/>
    </location>
</feature>
<feature type="binding site" evidence="3">
    <location>
        <position position="140"/>
    </location>
    <ligand>
        <name>a 1,2-diacyl-sn-glycero-3-phospho-(1D-myo-inositol)</name>
        <dbReference type="ChEBI" id="CHEBI:57880"/>
    </ligand>
</feature>
<feature type="binding site" evidence="3">
    <location>
        <position position="141"/>
    </location>
    <ligand>
        <name>a 1,2-diacyl-sn-glycero-3-phospho-(1D-myo-inositol)</name>
        <dbReference type="ChEBI" id="CHEBI:57880"/>
    </ligand>
</feature>
<feature type="binding site" evidence="3">
    <location>
        <position position="397"/>
    </location>
    <ligand>
        <name>a 1,2-diacyl-sn-glycero-3-phospho-(1D-myo-inositol)</name>
        <dbReference type="ChEBI" id="CHEBI:57880"/>
    </ligand>
</feature>
<feature type="binding site" evidence="3">
    <location>
        <position position="496"/>
    </location>
    <ligand>
        <name>a 1,2-diacyl-sn-glycero-3-phospho-(1D-myo-inositol)</name>
        <dbReference type="ChEBI" id="CHEBI:57880"/>
    </ligand>
</feature>
<feature type="binding site" evidence="3">
    <location>
        <position position="497"/>
    </location>
    <ligand>
        <name>a 1,2-diacyl-sn-glycero-3-phospho-(1D-myo-inositol)</name>
        <dbReference type="ChEBI" id="CHEBI:57880"/>
    </ligand>
</feature>
<feature type="binding site" evidence="3">
    <location>
        <position position="499"/>
    </location>
    <ligand>
        <name>a 1,2-diacyl-sn-glycero-3-phospho-(1D-myo-inositol)</name>
        <dbReference type="ChEBI" id="CHEBI:57880"/>
    </ligand>
</feature>
<feature type="modified residue" description="Phosphoserine" evidence="15">
    <location>
        <position position="554"/>
    </location>
</feature>
<feature type="modified residue" description="Phosphoserine" evidence="2">
    <location>
        <position position="562"/>
    </location>
</feature>
<feature type="modified residue" description="Phosphoserine" evidence="1">
    <location>
        <position position="592"/>
    </location>
</feature>
<feature type="modified residue" description="Phosphoserine" evidence="15">
    <location>
        <position position="607"/>
    </location>
</feature>
<feature type="modified residue" description="Phosphoserine; by SGK1" evidence="8 15">
    <location>
        <position position="663"/>
    </location>
</feature>
<feature type="modified residue" description="Phosphoserine" evidence="11">
    <location>
        <position position="719"/>
    </location>
</feature>
<feature type="modified residue" description="Phosphoserine" evidence="1">
    <location>
        <position position="813"/>
    </location>
</feature>
<feature type="modified residue" description="Phosphoserine" evidence="1">
    <location>
        <position position="816"/>
    </location>
</feature>
<feature type="mutagenesis site" description="Fails to bind EZR; when associated with F-520 and F-527. Abolishes sodium:proton antiporter activity; when associated with F-520 and F-527. Decreases plasma membrane expression; when associated with F-520 and F-527. Abnormal trafficking; when associated with F-520 and F-527." evidence="10">
    <original>K</original>
    <variation>Q</variation>
    <location>
        <position position="516"/>
    </location>
</feature>
<feature type="mutagenesis site" description="Fails to bind EZR; when associated with Q-516 and F-527. Abolishes sodium:proton antiporter activity; when associated with Q-516 and F-527. Abnormal trafficking; when associated with Q-516 and F-527." evidence="10">
    <original>R</original>
    <variation>F</variation>
    <location>
        <position position="520"/>
    </location>
</feature>
<feature type="mutagenesis site" description="Fails to bind EZR; when associated with Q-516 and F-520. Abolishes sodium:proton antiporter activity; when associated with Q-516 and F-520. Abnormal trafficking; when associated with Q-516 and F-520." evidence="10">
    <original>R</original>
    <variation>F</variation>
    <location>
        <position position="527"/>
    </location>
</feature>
<feature type="mutagenesis site" description="Decreases sodium:proton antiporter activity. Decreases cell membrane localization. Reduces size of the NHE3-containing complexes. Fails to associate with SNX27. Decreases NHERF2 binding." evidence="11 16">
    <original>S</original>
    <variation>A</variation>
    <location>
        <position position="719"/>
    </location>
</feature>
<feature type="mutagenesis site" description="Does not change sodium:proton antiporter activity." evidence="11">
    <original>S</original>
    <variation>D</variation>
    <location>
        <position position="719"/>
    </location>
</feature>